<comment type="function">
    <text evidence="1">Bidirectionally degrades single-stranded DNA into large acid-insoluble oligonucleotides, which are then degraded further into small acid-soluble oligonucleotides.</text>
</comment>
<comment type="catalytic activity">
    <reaction evidence="1">
        <text>Exonucleolytic cleavage in either 5'- to 3'- or 3'- to 5'-direction to yield nucleoside 5'-phosphates.</text>
        <dbReference type="EC" id="3.1.11.6"/>
    </reaction>
</comment>
<comment type="subunit">
    <text evidence="1">Heterooligomer composed of large and small subunits.</text>
</comment>
<comment type="subcellular location">
    <subcellularLocation>
        <location evidence="1">Cytoplasm</location>
    </subcellularLocation>
</comment>
<comment type="similarity">
    <text evidence="1 3">Belongs to the XseB family.</text>
</comment>
<sequence>MPKHSPPDTSPVARFEQSLQELEQLVQNMETGALSLEQSLGAYERGIALYRECHQALEQAQLRVRLLSDPMHPDDGEPFDPSLVSTSQ</sequence>
<gene>
    <name evidence="1" type="primary">xseB</name>
    <name type="ordered locus">XF_0660</name>
</gene>
<keyword id="KW-0963">Cytoplasm</keyword>
<keyword id="KW-0269">Exonuclease</keyword>
<keyword id="KW-0378">Hydrolase</keyword>
<keyword id="KW-0540">Nuclease</keyword>
<name>EX7S_XYLFA</name>
<reference key="1">
    <citation type="journal article" date="2000" name="Nature">
        <title>The genome sequence of the plant pathogen Xylella fastidiosa.</title>
        <authorList>
            <person name="Simpson A.J.G."/>
            <person name="Reinach F.C."/>
            <person name="Arruda P."/>
            <person name="Abreu F.A."/>
            <person name="Acencio M."/>
            <person name="Alvarenga R."/>
            <person name="Alves L.M.C."/>
            <person name="Araya J.E."/>
            <person name="Baia G.S."/>
            <person name="Baptista C.S."/>
            <person name="Barros M.H."/>
            <person name="Bonaccorsi E.D."/>
            <person name="Bordin S."/>
            <person name="Bove J.M."/>
            <person name="Briones M.R.S."/>
            <person name="Bueno M.R.P."/>
            <person name="Camargo A.A."/>
            <person name="Camargo L.E.A."/>
            <person name="Carraro D.M."/>
            <person name="Carrer H."/>
            <person name="Colauto N.B."/>
            <person name="Colombo C."/>
            <person name="Costa F.F."/>
            <person name="Costa M.C.R."/>
            <person name="Costa-Neto C.M."/>
            <person name="Coutinho L.L."/>
            <person name="Cristofani M."/>
            <person name="Dias-Neto E."/>
            <person name="Docena C."/>
            <person name="El-Dorry H."/>
            <person name="Facincani A.P."/>
            <person name="Ferreira A.J.S."/>
            <person name="Ferreira V.C.A."/>
            <person name="Ferro J.A."/>
            <person name="Fraga J.S."/>
            <person name="Franca S.C."/>
            <person name="Franco M.C."/>
            <person name="Frohme M."/>
            <person name="Furlan L.R."/>
            <person name="Garnier M."/>
            <person name="Goldman G.H."/>
            <person name="Goldman M.H.S."/>
            <person name="Gomes S.L."/>
            <person name="Gruber A."/>
            <person name="Ho P.L."/>
            <person name="Hoheisel J.D."/>
            <person name="Junqueira M.L."/>
            <person name="Kemper E.L."/>
            <person name="Kitajima J.P."/>
            <person name="Krieger J.E."/>
            <person name="Kuramae E.E."/>
            <person name="Laigret F."/>
            <person name="Lambais M.R."/>
            <person name="Leite L.C.C."/>
            <person name="Lemos E.G.M."/>
            <person name="Lemos M.V.F."/>
            <person name="Lopes S.A."/>
            <person name="Lopes C.R."/>
            <person name="Machado J.A."/>
            <person name="Machado M.A."/>
            <person name="Madeira A.M.B.N."/>
            <person name="Madeira H.M.F."/>
            <person name="Marino C.L."/>
            <person name="Marques M.V."/>
            <person name="Martins E.A.L."/>
            <person name="Martins E.M.F."/>
            <person name="Matsukuma A.Y."/>
            <person name="Menck C.F.M."/>
            <person name="Miracca E.C."/>
            <person name="Miyaki C.Y."/>
            <person name="Monteiro-Vitorello C.B."/>
            <person name="Moon D.H."/>
            <person name="Nagai M.A."/>
            <person name="Nascimento A.L.T.O."/>
            <person name="Netto L.E.S."/>
            <person name="Nhani A. Jr."/>
            <person name="Nobrega F.G."/>
            <person name="Nunes L.R."/>
            <person name="Oliveira M.A."/>
            <person name="de Oliveira M.C."/>
            <person name="de Oliveira R.C."/>
            <person name="Palmieri D.A."/>
            <person name="Paris A."/>
            <person name="Peixoto B.R."/>
            <person name="Pereira G.A.G."/>
            <person name="Pereira H.A. Jr."/>
            <person name="Pesquero J.B."/>
            <person name="Quaggio R.B."/>
            <person name="Roberto P.G."/>
            <person name="Rodrigues V."/>
            <person name="de Rosa A.J.M."/>
            <person name="de Rosa V.E. Jr."/>
            <person name="de Sa R.G."/>
            <person name="Santelli R.V."/>
            <person name="Sawasaki H.E."/>
            <person name="da Silva A.C.R."/>
            <person name="da Silva A.M."/>
            <person name="da Silva F.R."/>
            <person name="Silva W.A. Jr."/>
            <person name="da Silveira J.F."/>
            <person name="Silvestri M.L.Z."/>
            <person name="Siqueira W.J."/>
            <person name="de Souza A.A."/>
            <person name="de Souza A.P."/>
            <person name="Terenzi M.F."/>
            <person name="Truffi D."/>
            <person name="Tsai S.M."/>
            <person name="Tsuhako M.H."/>
            <person name="Vallada H."/>
            <person name="Van Sluys M.A."/>
            <person name="Verjovski-Almeida S."/>
            <person name="Vettore A.L."/>
            <person name="Zago M.A."/>
            <person name="Zatz M."/>
            <person name="Meidanis J."/>
            <person name="Setubal J.C."/>
        </authorList>
    </citation>
    <scope>NUCLEOTIDE SEQUENCE [LARGE SCALE GENOMIC DNA]</scope>
    <source>
        <strain>9a5c</strain>
    </source>
</reference>
<evidence type="ECO:0000255" key="1">
    <source>
        <dbReference type="HAMAP-Rule" id="MF_00337"/>
    </source>
</evidence>
<evidence type="ECO:0000256" key="2">
    <source>
        <dbReference type="SAM" id="MobiDB-lite"/>
    </source>
</evidence>
<evidence type="ECO:0000305" key="3"/>
<proteinExistence type="inferred from homology"/>
<feature type="chain" id="PRO_0000207036" description="Exodeoxyribonuclease 7 small subunit">
    <location>
        <begin position="1"/>
        <end position="88"/>
    </location>
</feature>
<feature type="region of interest" description="Disordered" evidence="2">
    <location>
        <begin position="68"/>
        <end position="88"/>
    </location>
</feature>
<accession>Q9PFJ7</accession>
<protein>
    <recommendedName>
        <fullName evidence="1">Exodeoxyribonuclease 7 small subunit</fullName>
        <ecNumber evidence="1">3.1.11.6</ecNumber>
    </recommendedName>
    <alternativeName>
        <fullName evidence="1">Exodeoxyribonuclease VII small subunit</fullName>
        <shortName evidence="1">Exonuclease VII small subunit</shortName>
    </alternativeName>
</protein>
<dbReference type="EC" id="3.1.11.6" evidence="1"/>
<dbReference type="EMBL" id="AE003849">
    <property type="protein sequence ID" value="AAF83470.1"/>
    <property type="molecule type" value="Genomic_DNA"/>
</dbReference>
<dbReference type="PIR" id="C82778">
    <property type="entry name" value="C82778"/>
</dbReference>
<dbReference type="RefSeq" id="WP_010893184.1">
    <property type="nucleotide sequence ID" value="NC_002488.3"/>
</dbReference>
<dbReference type="SMR" id="Q9PFJ7"/>
<dbReference type="STRING" id="160492.XF_0660"/>
<dbReference type="KEGG" id="xfa:XF_0660"/>
<dbReference type="eggNOG" id="COG1722">
    <property type="taxonomic scope" value="Bacteria"/>
</dbReference>
<dbReference type="HOGENOM" id="CLU_145918_3_3_6"/>
<dbReference type="Proteomes" id="UP000000812">
    <property type="component" value="Chromosome"/>
</dbReference>
<dbReference type="GO" id="GO:0005829">
    <property type="term" value="C:cytosol"/>
    <property type="evidence" value="ECO:0007669"/>
    <property type="project" value="TreeGrafter"/>
</dbReference>
<dbReference type="GO" id="GO:0009318">
    <property type="term" value="C:exodeoxyribonuclease VII complex"/>
    <property type="evidence" value="ECO:0007669"/>
    <property type="project" value="InterPro"/>
</dbReference>
<dbReference type="GO" id="GO:0008855">
    <property type="term" value="F:exodeoxyribonuclease VII activity"/>
    <property type="evidence" value="ECO:0007669"/>
    <property type="project" value="UniProtKB-UniRule"/>
</dbReference>
<dbReference type="GO" id="GO:0006308">
    <property type="term" value="P:DNA catabolic process"/>
    <property type="evidence" value="ECO:0007669"/>
    <property type="project" value="UniProtKB-UniRule"/>
</dbReference>
<dbReference type="Gene3D" id="1.10.287.1040">
    <property type="entry name" value="Exonuclease VII, small subunit"/>
    <property type="match status" value="1"/>
</dbReference>
<dbReference type="HAMAP" id="MF_00337">
    <property type="entry name" value="Exonuc_7_S"/>
    <property type="match status" value="1"/>
</dbReference>
<dbReference type="InterPro" id="IPR003761">
    <property type="entry name" value="Exonuc_VII_S"/>
</dbReference>
<dbReference type="InterPro" id="IPR037004">
    <property type="entry name" value="Exonuc_VII_ssu_sf"/>
</dbReference>
<dbReference type="NCBIfam" id="NF002140">
    <property type="entry name" value="PRK00977.1-4"/>
    <property type="match status" value="1"/>
</dbReference>
<dbReference type="NCBIfam" id="TIGR01280">
    <property type="entry name" value="xseB"/>
    <property type="match status" value="1"/>
</dbReference>
<dbReference type="PANTHER" id="PTHR34137">
    <property type="entry name" value="EXODEOXYRIBONUCLEASE 7 SMALL SUBUNIT"/>
    <property type="match status" value="1"/>
</dbReference>
<dbReference type="PANTHER" id="PTHR34137:SF1">
    <property type="entry name" value="EXODEOXYRIBONUCLEASE 7 SMALL SUBUNIT"/>
    <property type="match status" value="1"/>
</dbReference>
<dbReference type="Pfam" id="PF02609">
    <property type="entry name" value="Exonuc_VII_S"/>
    <property type="match status" value="1"/>
</dbReference>
<dbReference type="SUPFAM" id="SSF116842">
    <property type="entry name" value="XseB-like"/>
    <property type="match status" value="1"/>
</dbReference>
<organism>
    <name type="scientific">Xylella fastidiosa (strain 9a5c)</name>
    <dbReference type="NCBI Taxonomy" id="160492"/>
    <lineage>
        <taxon>Bacteria</taxon>
        <taxon>Pseudomonadati</taxon>
        <taxon>Pseudomonadota</taxon>
        <taxon>Gammaproteobacteria</taxon>
        <taxon>Lysobacterales</taxon>
        <taxon>Lysobacteraceae</taxon>
        <taxon>Xylella</taxon>
    </lineage>
</organism>